<gene>
    <name type="primary">foxa2</name>
    <name type="synonym">hnf3b</name>
</gene>
<dbReference type="EMBL" id="AB001572">
    <property type="protein sequence ID" value="BAA23579.1"/>
    <property type="molecule type" value="mRNA"/>
</dbReference>
<dbReference type="RefSeq" id="NP_001098162.1">
    <property type="nucleotide sequence ID" value="NM_001104692.1"/>
</dbReference>
<dbReference type="SMR" id="O42097"/>
<dbReference type="FunCoup" id="O42097">
    <property type="interactions" value="563"/>
</dbReference>
<dbReference type="STRING" id="8090.ENSORLP00000021768"/>
<dbReference type="Ensembl" id="ENSORLT00000021769.2">
    <property type="protein sequence ID" value="ENSORLP00000021768.2"/>
    <property type="gene ID" value="ENSORLG00000017407.2"/>
</dbReference>
<dbReference type="GeneID" id="100049256"/>
<dbReference type="KEGG" id="ola:100049256"/>
<dbReference type="CTD" id="3170"/>
<dbReference type="eggNOG" id="KOG3563">
    <property type="taxonomic scope" value="Eukaryota"/>
</dbReference>
<dbReference type="GeneTree" id="ENSGT00940000155999"/>
<dbReference type="InParanoid" id="O42097"/>
<dbReference type="OrthoDB" id="5954824at2759"/>
<dbReference type="Proteomes" id="UP000001038">
    <property type="component" value="Chromosome 22"/>
</dbReference>
<dbReference type="Proteomes" id="UP000265180">
    <property type="component" value="Unplaced"/>
</dbReference>
<dbReference type="Proteomes" id="UP000265200">
    <property type="component" value="Unplaced"/>
</dbReference>
<dbReference type="Bgee" id="ENSORLG00000017407">
    <property type="expression patterns" value="Expressed in liver and 7 other cell types or tissues"/>
</dbReference>
<dbReference type="GO" id="GO:0005634">
    <property type="term" value="C:nucleus"/>
    <property type="evidence" value="ECO:0007669"/>
    <property type="project" value="UniProtKB-SubCell"/>
</dbReference>
<dbReference type="GO" id="GO:0000981">
    <property type="term" value="F:DNA-binding transcription factor activity, RNA polymerase II-specific"/>
    <property type="evidence" value="ECO:0000318"/>
    <property type="project" value="GO_Central"/>
</dbReference>
<dbReference type="GO" id="GO:0019904">
    <property type="term" value="F:protein domain specific binding"/>
    <property type="evidence" value="ECO:0007669"/>
    <property type="project" value="InterPro"/>
</dbReference>
<dbReference type="GO" id="GO:0000978">
    <property type="term" value="F:RNA polymerase II cis-regulatory region sequence-specific DNA binding"/>
    <property type="evidence" value="ECO:0000318"/>
    <property type="project" value="GO_Central"/>
</dbReference>
<dbReference type="GO" id="GO:0009653">
    <property type="term" value="P:anatomical structure morphogenesis"/>
    <property type="evidence" value="ECO:0000318"/>
    <property type="project" value="GO_Central"/>
</dbReference>
<dbReference type="GO" id="GO:0030154">
    <property type="term" value="P:cell differentiation"/>
    <property type="evidence" value="ECO:0000318"/>
    <property type="project" value="GO_Central"/>
</dbReference>
<dbReference type="GO" id="GO:0006357">
    <property type="term" value="P:regulation of transcription by RNA polymerase II"/>
    <property type="evidence" value="ECO:0000318"/>
    <property type="project" value="GO_Central"/>
</dbReference>
<dbReference type="FunFam" id="1.10.10.10:FF:000042">
    <property type="entry name" value="hepatocyte nuclear factor 3-beta"/>
    <property type="match status" value="1"/>
</dbReference>
<dbReference type="Gene3D" id="1.10.10.10">
    <property type="entry name" value="Winged helix-like DNA-binding domain superfamily/Winged helix DNA-binding domain"/>
    <property type="match status" value="1"/>
</dbReference>
<dbReference type="InterPro" id="IPR013638">
    <property type="entry name" value="Fork-head_N"/>
</dbReference>
<dbReference type="InterPro" id="IPR001766">
    <property type="entry name" value="Fork_head_dom"/>
</dbReference>
<dbReference type="InterPro" id="IPR018533">
    <property type="entry name" value="Forkhead_box_C"/>
</dbReference>
<dbReference type="InterPro" id="IPR050211">
    <property type="entry name" value="FOX_domain-containing"/>
</dbReference>
<dbReference type="InterPro" id="IPR018122">
    <property type="entry name" value="TF_fork_head_CS_1"/>
</dbReference>
<dbReference type="InterPro" id="IPR030456">
    <property type="entry name" value="TF_fork_head_CS_2"/>
</dbReference>
<dbReference type="InterPro" id="IPR036388">
    <property type="entry name" value="WH-like_DNA-bd_sf"/>
</dbReference>
<dbReference type="InterPro" id="IPR036390">
    <property type="entry name" value="WH_DNA-bd_sf"/>
</dbReference>
<dbReference type="PANTHER" id="PTHR11829">
    <property type="entry name" value="FORKHEAD BOX PROTEIN"/>
    <property type="match status" value="1"/>
</dbReference>
<dbReference type="PANTHER" id="PTHR11829:SF167">
    <property type="entry name" value="HEPATOCYTE NUCLEAR FACTOR 3-BETA"/>
    <property type="match status" value="1"/>
</dbReference>
<dbReference type="Pfam" id="PF00250">
    <property type="entry name" value="Forkhead"/>
    <property type="match status" value="1"/>
</dbReference>
<dbReference type="Pfam" id="PF08430">
    <property type="entry name" value="Forkhead_N"/>
    <property type="match status" value="1"/>
</dbReference>
<dbReference type="Pfam" id="PF09354">
    <property type="entry name" value="HNF_C"/>
    <property type="match status" value="1"/>
</dbReference>
<dbReference type="PRINTS" id="PR00053">
    <property type="entry name" value="FORKHEAD"/>
</dbReference>
<dbReference type="SMART" id="SM00339">
    <property type="entry name" value="FH"/>
    <property type="match status" value="1"/>
</dbReference>
<dbReference type="SUPFAM" id="SSF46785">
    <property type="entry name" value="Winged helix' DNA-binding domain"/>
    <property type="match status" value="1"/>
</dbReference>
<dbReference type="PROSITE" id="PS00657">
    <property type="entry name" value="FORK_HEAD_1"/>
    <property type="match status" value="1"/>
</dbReference>
<dbReference type="PROSITE" id="PS00658">
    <property type="entry name" value="FORK_HEAD_2"/>
    <property type="match status" value="1"/>
</dbReference>
<dbReference type="PROSITE" id="PS50039">
    <property type="entry name" value="FORK_HEAD_3"/>
    <property type="match status" value="1"/>
</dbReference>
<protein>
    <recommendedName>
        <fullName>Hepatocyte nuclear factor 3-beta</fullName>
        <shortName>HNF-3-beta</shortName>
        <shortName>HNF-3B</shortName>
    </recommendedName>
    <alternativeName>
        <fullName>Forkhead box protein A2</fullName>
    </alternativeName>
    <alternativeName>
        <fullName>Me-HNF3B</fullName>
    </alternativeName>
</protein>
<accession>O42097</accession>
<organism>
    <name type="scientific">Oryzias latipes</name>
    <name type="common">Japanese rice fish</name>
    <name type="synonym">Japanese killifish</name>
    <dbReference type="NCBI Taxonomy" id="8090"/>
    <lineage>
        <taxon>Eukaryota</taxon>
        <taxon>Metazoa</taxon>
        <taxon>Chordata</taxon>
        <taxon>Craniata</taxon>
        <taxon>Vertebrata</taxon>
        <taxon>Euteleostomi</taxon>
        <taxon>Actinopterygii</taxon>
        <taxon>Neopterygii</taxon>
        <taxon>Teleostei</taxon>
        <taxon>Neoteleostei</taxon>
        <taxon>Acanthomorphata</taxon>
        <taxon>Ovalentaria</taxon>
        <taxon>Atherinomorphae</taxon>
        <taxon>Beloniformes</taxon>
        <taxon>Adrianichthyidae</taxon>
        <taxon>Oryziinae</taxon>
        <taxon>Oryzias</taxon>
    </lineage>
</organism>
<keyword id="KW-0010">Activator</keyword>
<keyword id="KW-0238">DNA-binding</keyword>
<keyword id="KW-0539">Nucleus</keyword>
<keyword id="KW-1185">Reference proteome</keyword>
<keyword id="KW-0804">Transcription</keyword>
<keyword id="KW-0805">Transcription regulation</keyword>
<reference key="1">
    <citation type="journal article" date="2001" name="Zool. Sci.">
        <title>Predicted protein structure of medaka FoxA3 and its expression in polster.</title>
        <authorList>
            <person name="Okamoto H.M."/>
            <person name="Nakayama I."/>
            <person name="Nagoya H."/>
            <person name="Araki K."/>
        </authorList>
    </citation>
    <scope>NUCLEOTIDE SEQUENCE [MRNA]</scope>
    <source>
        <strain>Orange-red</strain>
    </source>
</reference>
<comment type="function">
    <text evidence="1">Transcription activator for a number of liver genes. Interacts with the cis-acting regulatory regions of these genes (By similarity).</text>
</comment>
<comment type="subcellular location">
    <subcellularLocation>
        <location evidence="2">Nucleus</location>
    </subcellularLocation>
</comment>
<name>FOXA2_ORYLA</name>
<sequence>MMLGAVKMEGHEHTDWSTYYGEPECYTSVGNMNTGLGMNSMNTYMSMSGMSTTANMTANSMNMSYVNTGMSPSMTGMSPGTGAMNGMGAGMTAMSTALSPSMSPMTGQPGSMNALTSYTNMNAMSPIYGQSNINRSRDPKTYRRSYTHAKPPYSYISLITMAIQQSPSKMLTLAEIYQWIMDLFPFYRQNQQRWQNSIRHSLSFNDCFLKVPRSPDKPGKGSFWTLHPDSGNMFENGCYLRRQKRFKCEKKMSMKEPGRKGGDGGSANSSSDSCNGNESPHSNSSSGEHKRSLSDMKGSQALSPEHTAPSPVSQGQHLMSQHHSVLAHEAHLKPEHHYSFNHPFSINNLMSSEQQHHKMDLKTYEQVMHYSGYGSPMTGALSMGSMAGKAGLDSASIPDTSYYQGVYSRPIMNSS</sequence>
<evidence type="ECO:0000250" key="1"/>
<evidence type="ECO:0000255" key="2">
    <source>
        <dbReference type="PROSITE-ProRule" id="PRU00089"/>
    </source>
</evidence>
<evidence type="ECO:0000256" key="3">
    <source>
        <dbReference type="SAM" id="MobiDB-lite"/>
    </source>
</evidence>
<feature type="chain" id="PRO_0000091798" description="Hepatocyte nuclear factor 3-beta">
    <location>
        <begin position="1"/>
        <end position="415"/>
    </location>
</feature>
<feature type="DNA-binding region" description="Fork-head" evidence="2">
    <location>
        <begin position="150"/>
        <end position="244"/>
    </location>
</feature>
<feature type="region of interest" description="Disordered" evidence="3">
    <location>
        <begin position="251"/>
        <end position="324"/>
    </location>
</feature>
<feature type="compositionally biased region" description="Basic and acidic residues" evidence="3">
    <location>
        <begin position="251"/>
        <end position="262"/>
    </location>
</feature>
<feature type="compositionally biased region" description="Low complexity" evidence="3">
    <location>
        <begin position="266"/>
        <end position="277"/>
    </location>
</feature>
<feature type="compositionally biased region" description="Polar residues" evidence="3">
    <location>
        <begin position="310"/>
        <end position="323"/>
    </location>
</feature>
<proteinExistence type="evidence at transcript level"/>